<evidence type="ECO:0000255" key="1">
    <source>
        <dbReference type="HAMAP-Rule" id="MF_00454"/>
    </source>
</evidence>
<protein>
    <recommendedName>
        <fullName evidence="1">Fluoride-specific ion channel FluC</fullName>
    </recommendedName>
</protein>
<name>FLUC_SHEWM</name>
<comment type="function">
    <text evidence="1">Fluoride-specific ion channel. Important for reducing fluoride concentration in the cell, thus reducing its toxicity.</text>
</comment>
<comment type="catalytic activity">
    <reaction evidence="1">
        <text>fluoride(in) = fluoride(out)</text>
        <dbReference type="Rhea" id="RHEA:76159"/>
        <dbReference type="ChEBI" id="CHEBI:17051"/>
    </reaction>
    <physiologicalReaction direction="left-to-right" evidence="1">
        <dbReference type="Rhea" id="RHEA:76160"/>
    </physiologicalReaction>
</comment>
<comment type="activity regulation">
    <text evidence="1">Na(+) is not transported, but it plays an essential structural role and its presence is essential for fluoride channel function.</text>
</comment>
<comment type="subcellular location">
    <subcellularLocation>
        <location evidence="1">Cell inner membrane</location>
        <topology evidence="1">Multi-pass membrane protein</topology>
    </subcellularLocation>
</comment>
<comment type="similarity">
    <text evidence="1">Belongs to the fluoride channel Fluc/FEX (TC 1.A.43) family.</text>
</comment>
<sequence length="124" mass="13362">MNNILFVALGGSIGAVFRYLISIFMVQLFGSAFPFGTLLVNIIGSFLMGVIYALGQVSEVSPEIKALVGVGLLGALTTFSTFSNETLLLIQSGAWLKAFLNIALNLCLCIFMVYLGQQLVFSRI</sequence>
<keyword id="KW-0997">Cell inner membrane</keyword>
<keyword id="KW-1003">Cell membrane</keyword>
<keyword id="KW-0407">Ion channel</keyword>
<keyword id="KW-0406">Ion transport</keyword>
<keyword id="KW-0472">Membrane</keyword>
<keyword id="KW-0479">Metal-binding</keyword>
<keyword id="KW-1185">Reference proteome</keyword>
<keyword id="KW-0915">Sodium</keyword>
<keyword id="KW-0812">Transmembrane</keyword>
<keyword id="KW-1133">Transmembrane helix</keyword>
<keyword id="KW-0813">Transport</keyword>
<feature type="chain" id="PRO_1000125159" description="Fluoride-specific ion channel FluC">
    <location>
        <begin position="1"/>
        <end position="124"/>
    </location>
</feature>
<feature type="transmembrane region" description="Helical" evidence="1">
    <location>
        <begin position="4"/>
        <end position="24"/>
    </location>
</feature>
<feature type="transmembrane region" description="Helical" evidence="1">
    <location>
        <begin position="35"/>
        <end position="55"/>
    </location>
</feature>
<feature type="transmembrane region" description="Helical" evidence="1">
    <location>
        <begin position="70"/>
        <end position="90"/>
    </location>
</feature>
<feature type="transmembrane region" description="Helical" evidence="1">
    <location>
        <begin position="95"/>
        <end position="115"/>
    </location>
</feature>
<feature type="binding site" evidence="1">
    <location>
        <position position="74"/>
    </location>
    <ligand>
        <name>Na(+)</name>
        <dbReference type="ChEBI" id="CHEBI:29101"/>
        <note>structural</note>
    </ligand>
</feature>
<feature type="binding site" evidence="1">
    <location>
        <position position="77"/>
    </location>
    <ligand>
        <name>Na(+)</name>
        <dbReference type="ChEBI" id="CHEBI:29101"/>
        <note>structural</note>
    </ligand>
</feature>
<gene>
    <name evidence="1" type="primary">fluC</name>
    <name evidence="1" type="synonym">crcB</name>
    <name type="ordered locus">Swoo_2480</name>
</gene>
<proteinExistence type="inferred from homology"/>
<reference key="1">
    <citation type="submission" date="2008-02" db="EMBL/GenBank/DDBJ databases">
        <title>Complete sequence of Shewanella woodyi ATCC 51908.</title>
        <authorList>
            <consortium name="US DOE Joint Genome Institute"/>
            <person name="Copeland A."/>
            <person name="Lucas S."/>
            <person name="Lapidus A."/>
            <person name="Glavina del Rio T."/>
            <person name="Dalin E."/>
            <person name="Tice H."/>
            <person name="Bruce D."/>
            <person name="Goodwin L."/>
            <person name="Pitluck S."/>
            <person name="Sims D."/>
            <person name="Brettin T."/>
            <person name="Detter J.C."/>
            <person name="Han C."/>
            <person name="Kuske C.R."/>
            <person name="Schmutz J."/>
            <person name="Larimer F."/>
            <person name="Land M."/>
            <person name="Hauser L."/>
            <person name="Kyrpides N."/>
            <person name="Lykidis A."/>
            <person name="Zhao J.-S."/>
            <person name="Richardson P."/>
        </authorList>
    </citation>
    <scope>NUCLEOTIDE SEQUENCE [LARGE SCALE GENOMIC DNA]</scope>
    <source>
        <strain>ATCC 51908 / MS32</strain>
    </source>
</reference>
<dbReference type="EMBL" id="CP000961">
    <property type="protein sequence ID" value="ACA86757.1"/>
    <property type="molecule type" value="Genomic_DNA"/>
</dbReference>
<dbReference type="RefSeq" id="WP_012325099.1">
    <property type="nucleotide sequence ID" value="NC_010506.1"/>
</dbReference>
<dbReference type="SMR" id="B1KG50"/>
<dbReference type="STRING" id="392500.Swoo_2480"/>
<dbReference type="KEGG" id="swd:Swoo_2480"/>
<dbReference type="eggNOG" id="COG0239">
    <property type="taxonomic scope" value="Bacteria"/>
</dbReference>
<dbReference type="HOGENOM" id="CLU_114342_2_3_6"/>
<dbReference type="Proteomes" id="UP000002168">
    <property type="component" value="Chromosome"/>
</dbReference>
<dbReference type="GO" id="GO:0005886">
    <property type="term" value="C:plasma membrane"/>
    <property type="evidence" value="ECO:0007669"/>
    <property type="project" value="UniProtKB-SubCell"/>
</dbReference>
<dbReference type="GO" id="GO:0062054">
    <property type="term" value="F:fluoride channel activity"/>
    <property type="evidence" value="ECO:0007669"/>
    <property type="project" value="UniProtKB-UniRule"/>
</dbReference>
<dbReference type="GO" id="GO:0046872">
    <property type="term" value="F:metal ion binding"/>
    <property type="evidence" value="ECO:0007669"/>
    <property type="project" value="UniProtKB-KW"/>
</dbReference>
<dbReference type="GO" id="GO:0140114">
    <property type="term" value="P:cellular detoxification of fluoride"/>
    <property type="evidence" value="ECO:0007669"/>
    <property type="project" value="UniProtKB-UniRule"/>
</dbReference>
<dbReference type="HAMAP" id="MF_00454">
    <property type="entry name" value="FluC"/>
    <property type="match status" value="1"/>
</dbReference>
<dbReference type="InterPro" id="IPR003691">
    <property type="entry name" value="FluC"/>
</dbReference>
<dbReference type="NCBIfam" id="TIGR00494">
    <property type="entry name" value="crcB"/>
    <property type="match status" value="1"/>
</dbReference>
<dbReference type="PANTHER" id="PTHR28259">
    <property type="entry name" value="FLUORIDE EXPORT PROTEIN 1-RELATED"/>
    <property type="match status" value="1"/>
</dbReference>
<dbReference type="PANTHER" id="PTHR28259:SF1">
    <property type="entry name" value="FLUORIDE EXPORT PROTEIN 1-RELATED"/>
    <property type="match status" value="1"/>
</dbReference>
<dbReference type="Pfam" id="PF02537">
    <property type="entry name" value="CRCB"/>
    <property type="match status" value="1"/>
</dbReference>
<accession>B1KG50</accession>
<organism>
    <name type="scientific">Shewanella woodyi (strain ATCC 51908 / MS32)</name>
    <dbReference type="NCBI Taxonomy" id="392500"/>
    <lineage>
        <taxon>Bacteria</taxon>
        <taxon>Pseudomonadati</taxon>
        <taxon>Pseudomonadota</taxon>
        <taxon>Gammaproteobacteria</taxon>
        <taxon>Alteromonadales</taxon>
        <taxon>Shewanellaceae</taxon>
        <taxon>Shewanella</taxon>
    </lineage>
</organism>